<proteinExistence type="inferred from homology"/>
<accession>B7LQP3</accession>
<comment type="function">
    <text evidence="1">Part of a membrane-bound complex that couples electron transfer with translocation of ions across the membrane. Required to maintain the reduced state of SoxR.</text>
</comment>
<comment type="subunit">
    <text evidence="1">The complex is composed of six subunits: RsxA, RsxB, RsxC, RsxD, RsxE and RsxG.</text>
</comment>
<comment type="subcellular location">
    <subcellularLocation>
        <location evidence="1">Cell inner membrane</location>
        <topology evidence="1">Multi-pass membrane protein</topology>
    </subcellularLocation>
</comment>
<comment type="similarity">
    <text evidence="1">Belongs to the NqrDE/RnfAE family.</text>
</comment>
<organism>
    <name type="scientific">Escherichia fergusonii (strain ATCC 35469 / DSM 13698 / CCUG 18766 / IAM 14443 / JCM 21226 / LMG 7866 / NBRC 102419 / NCTC 12128 / CDC 0568-73)</name>
    <dbReference type="NCBI Taxonomy" id="585054"/>
    <lineage>
        <taxon>Bacteria</taxon>
        <taxon>Pseudomonadati</taxon>
        <taxon>Pseudomonadota</taxon>
        <taxon>Gammaproteobacteria</taxon>
        <taxon>Enterobacterales</taxon>
        <taxon>Enterobacteriaceae</taxon>
        <taxon>Escherichia</taxon>
    </lineage>
</organism>
<dbReference type="EC" id="7.-.-.-" evidence="1"/>
<dbReference type="EMBL" id="CU928158">
    <property type="protein sequence ID" value="CAQ88936.1"/>
    <property type="molecule type" value="Genomic_DNA"/>
</dbReference>
<dbReference type="RefSeq" id="WP_000133195.1">
    <property type="nucleotide sequence ID" value="NC_011740.1"/>
</dbReference>
<dbReference type="SMR" id="B7LQP3"/>
<dbReference type="GeneID" id="75057538"/>
<dbReference type="KEGG" id="efe:EFER_1416"/>
<dbReference type="HOGENOM" id="CLU_095255_1_0_6"/>
<dbReference type="OrthoDB" id="9803631at2"/>
<dbReference type="Proteomes" id="UP000000745">
    <property type="component" value="Chromosome"/>
</dbReference>
<dbReference type="GO" id="GO:0005886">
    <property type="term" value="C:plasma membrane"/>
    <property type="evidence" value="ECO:0007669"/>
    <property type="project" value="UniProtKB-SubCell"/>
</dbReference>
<dbReference type="GO" id="GO:0022900">
    <property type="term" value="P:electron transport chain"/>
    <property type="evidence" value="ECO:0007669"/>
    <property type="project" value="UniProtKB-UniRule"/>
</dbReference>
<dbReference type="HAMAP" id="MF_00459">
    <property type="entry name" value="RsxA_RnfA"/>
    <property type="match status" value="1"/>
</dbReference>
<dbReference type="InterPro" id="IPR011293">
    <property type="entry name" value="Ion_transpt_RnfA/RsxA"/>
</dbReference>
<dbReference type="InterPro" id="IPR003667">
    <property type="entry name" value="NqrDE/RnfAE"/>
</dbReference>
<dbReference type="InterPro" id="IPR050133">
    <property type="entry name" value="NqrDE/RnfAE_oxidrdctase"/>
</dbReference>
<dbReference type="NCBIfam" id="NF003481">
    <property type="entry name" value="PRK05151.1"/>
    <property type="match status" value="1"/>
</dbReference>
<dbReference type="NCBIfam" id="TIGR01943">
    <property type="entry name" value="rnfA"/>
    <property type="match status" value="1"/>
</dbReference>
<dbReference type="PANTHER" id="PTHR30335">
    <property type="entry name" value="INTEGRAL MEMBRANE PROTEIN OF SOXR-REDUCING COMPLEX"/>
    <property type="match status" value="1"/>
</dbReference>
<dbReference type="PANTHER" id="PTHR30335:SF0">
    <property type="entry name" value="ION-TRANSLOCATING OXIDOREDUCTASE COMPLEX SUBUNIT A"/>
    <property type="match status" value="1"/>
</dbReference>
<dbReference type="Pfam" id="PF02508">
    <property type="entry name" value="Rnf-Nqr"/>
    <property type="match status" value="1"/>
</dbReference>
<dbReference type="PIRSF" id="PIRSF006102">
    <property type="entry name" value="NQR_DE"/>
    <property type="match status" value="1"/>
</dbReference>
<gene>
    <name evidence="1" type="primary">rsxA</name>
    <name type="ordered locus">EFER_1416</name>
</gene>
<reference key="1">
    <citation type="journal article" date="2009" name="PLoS Genet.">
        <title>Organised genome dynamics in the Escherichia coli species results in highly diverse adaptive paths.</title>
        <authorList>
            <person name="Touchon M."/>
            <person name="Hoede C."/>
            <person name="Tenaillon O."/>
            <person name="Barbe V."/>
            <person name="Baeriswyl S."/>
            <person name="Bidet P."/>
            <person name="Bingen E."/>
            <person name="Bonacorsi S."/>
            <person name="Bouchier C."/>
            <person name="Bouvet O."/>
            <person name="Calteau A."/>
            <person name="Chiapello H."/>
            <person name="Clermont O."/>
            <person name="Cruveiller S."/>
            <person name="Danchin A."/>
            <person name="Diard M."/>
            <person name="Dossat C."/>
            <person name="Karoui M.E."/>
            <person name="Frapy E."/>
            <person name="Garry L."/>
            <person name="Ghigo J.M."/>
            <person name="Gilles A.M."/>
            <person name="Johnson J."/>
            <person name="Le Bouguenec C."/>
            <person name="Lescat M."/>
            <person name="Mangenot S."/>
            <person name="Martinez-Jehanne V."/>
            <person name="Matic I."/>
            <person name="Nassif X."/>
            <person name="Oztas S."/>
            <person name="Petit M.A."/>
            <person name="Pichon C."/>
            <person name="Rouy Z."/>
            <person name="Ruf C.S."/>
            <person name="Schneider D."/>
            <person name="Tourret J."/>
            <person name="Vacherie B."/>
            <person name="Vallenet D."/>
            <person name="Medigue C."/>
            <person name="Rocha E.P.C."/>
            <person name="Denamur E."/>
        </authorList>
    </citation>
    <scope>NUCLEOTIDE SEQUENCE [LARGE SCALE GENOMIC DNA]</scope>
    <source>
        <strain>ATCC 35469 / DSM 13698 / BCRC 15582 / CCUG 18766 / IAM 14443 / JCM 21226 / LMG 7866 / NBRC 102419 / NCTC 12128 / CDC 0568-73</strain>
    </source>
</reference>
<evidence type="ECO:0000255" key="1">
    <source>
        <dbReference type="HAMAP-Rule" id="MF_00459"/>
    </source>
</evidence>
<feature type="chain" id="PRO_1000191725" description="Ion-translocating oxidoreductase complex subunit A">
    <location>
        <begin position="1"/>
        <end position="193"/>
    </location>
</feature>
<feature type="transmembrane region" description="Helical" evidence="1">
    <location>
        <begin position="5"/>
        <end position="25"/>
    </location>
</feature>
<feature type="transmembrane region" description="Helical" evidence="1">
    <location>
        <begin position="39"/>
        <end position="59"/>
    </location>
</feature>
<feature type="transmembrane region" description="Helical" evidence="1">
    <location>
        <begin position="63"/>
        <end position="83"/>
    </location>
</feature>
<feature type="transmembrane region" description="Helical" evidence="1">
    <location>
        <begin position="102"/>
        <end position="122"/>
    </location>
</feature>
<feature type="transmembrane region" description="Helical" evidence="1">
    <location>
        <begin position="134"/>
        <end position="154"/>
    </location>
</feature>
<feature type="transmembrane region" description="Helical" evidence="1">
    <location>
        <begin position="171"/>
        <end position="191"/>
    </location>
</feature>
<keyword id="KW-0997">Cell inner membrane</keyword>
<keyword id="KW-1003">Cell membrane</keyword>
<keyword id="KW-0249">Electron transport</keyword>
<keyword id="KW-0472">Membrane</keyword>
<keyword id="KW-1278">Translocase</keyword>
<keyword id="KW-0812">Transmembrane</keyword>
<keyword id="KW-1133">Transmembrane helix</keyword>
<keyword id="KW-0813">Transport</keyword>
<name>RSXA_ESCF3</name>
<sequence>MTDYLLLFVGTVLVNNFVLVKFLGLCPFMGVSKKLETAMGMGLATTFVMTLASICAWLIDTWILIPLNLIYLRTLAFILVIAVVVQFTEMVVRKTSPVLYRLLGIFLPLITTNCAVLGVALLNINLGHNFLQSALYGFSAAVGFSLVMVLFAAIRERLAVANVPAPFRGNAIALITAGLMSLAFMGFSGLVKL</sequence>
<protein>
    <recommendedName>
        <fullName evidence="1">Ion-translocating oxidoreductase complex subunit A</fullName>
        <ecNumber evidence="1">7.-.-.-</ecNumber>
    </recommendedName>
    <alternativeName>
        <fullName evidence="1">Rsx electron transport complex subunit A</fullName>
    </alternativeName>
</protein>